<comment type="function">
    <text evidence="1">Catalyzes the transfer of a dimethylallyl group onto the adenine at position 37 in tRNAs that read codons beginning with uridine, leading to the formation of N6-(dimethylallyl)adenosine (i(6)A).</text>
</comment>
<comment type="catalytic activity">
    <reaction evidence="1">
        <text>adenosine(37) in tRNA + dimethylallyl diphosphate = N(6)-dimethylallyladenosine(37) in tRNA + diphosphate</text>
        <dbReference type="Rhea" id="RHEA:26482"/>
        <dbReference type="Rhea" id="RHEA-COMP:10162"/>
        <dbReference type="Rhea" id="RHEA-COMP:10375"/>
        <dbReference type="ChEBI" id="CHEBI:33019"/>
        <dbReference type="ChEBI" id="CHEBI:57623"/>
        <dbReference type="ChEBI" id="CHEBI:74411"/>
        <dbReference type="ChEBI" id="CHEBI:74415"/>
        <dbReference type="EC" id="2.5.1.75"/>
    </reaction>
</comment>
<comment type="cofactor">
    <cofactor evidence="1">
        <name>Mg(2+)</name>
        <dbReference type="ChEBI" id="CHEBI:18420"/>
    </cofactor>
</comment>
<comment type="subunit">
    <text evidence="1">Monomer.</text>
</comment>
<comment type="similarity">
    <text evidence="1">Belongs to the IPP transferase family.</text>
</comment>
<proteinExistence type="inferred from homology"/>
<dbReference type="EC" id="2.5.1.75" evidence="1"/>
<dbReference type="EMBL" id="CP000431">
    <property type="protein sequence ID" value="ABG98547.1"/>
    <property type="molecule type" value="Genomic_DNA"/>
</dbReference>
<dbReference type="RefSeq" id="WP_011598568.1">
    <property type="nucleotide sequence ID" value="NC_008268.1"/>
</dbReference>
<dbReference type="SMR" id="Q0S1N9"/>
<dbReference type="KEGG" id="rha:RHA1_ro06775"/>
<dbReference type="eggNOG" id="COG0324">
    <property type="taxonomic scope" value="Bacteria"/>
</dbReference>
<dbReference type="HOGENOM" id="CLU_032616_0_1_11"/>
<dbReference type="Proteomes" id="UP000008710">
    <property type="component" value="Chromosome"/>
</dbReference>
<dbReference type="GO" id="GO:0005524">
    <property type="term" value="F:ATP binding"/>
    <property type="evidence" value="ECO:0007669"/>
    <property type="project" value="UniProtKB-UniRule"/>
</dbReference>
<dbReference type="GO" id="GO:0052381">
    <property type="term" value="F:tRNA dimethylallyltransferase activity"/>
    <property type="evidence" value="ECO:0007669"/>
    <property type="project" value="UniProtKB-UniRule"/>
</dbReference>
<dbReference type="GO" id="GO:0006400">
    <property type="term" value="P:tRNA modification"/>
    <property type="evidence" value="ECO:0007669"/>
    <property type="project" value="TreeGrafter"/>
</dbReference>
<dbReference type="FunFam" id="1.10.20.140:FF:000001">
    <property type="entry name" value="tRNA dimethylallyltransferase"/>
    <property type="match status" value="1"/>
</dbReference>
<dbReference type="Gene3D" id="1.10.20.140">
    <property type="match status" value="1"/>
</dbReference>
<dbReference type="Gene3D" id="3.40.50.300">
    <property type="entry name" value="P-loop containing nucleotide triphosphate hydrolases"/>
    <property type="match status" value="1"/>
</dbReference>
<dbReference type="HAMAP" id="MF_00185">
    <property type="entry name" value="IPP_trans"/>
    <property type="match status" value="1"/>
</dbReference>
<dbReference type="InterPro" id="IPR039657">
    <property type="entry name" value="Dimethylallyltransferase"/>
</dbReference>
<dbReference type="InterPro" id="IPR018022">
    <property type="entry name" value="IPT"/>
</dbReference>
<dbReference type="InterPro" id="IPR027417">
    <property type="entry name" value="P-loop_NTPase"/>
</dbReference>
<dbReference type="NCBIfam" id="TIGR00174">
    <property type="entry name" value="miaA"/>
    <property type="match status" value="1"/>
</dbReference>
<dbReference type="PANTHER" id="PTHR11088">
    <property type="entry name" value="TRNA DIMETHYLALLYLTRANSFERASE"/>
    <property type="match status" value="1"/>
</dbReference>
<dbReference type="PANTHER" id="PTHR11088:SF60">
    <property type="entry name" value="TRNA DIMETHYLALLYLTRANSFERASE"/>
    <property type="match status" value="1"/>
</dbReference>
<dbReference type="Pfam" id="PF01715">
    <property type="entry name" value="IPPT"/>
    <property type="match status" value="1"/>
</dbReference>
<dbReference type="SUPFAM" id="SSF52540">
    <property type="entry name" value="P-loop containing nucleoside triphosphate hydrolases"/>
    <property type="match status" value="1"/>
</dbReference>
<name>MIAA_RHOJR</name>
<sequence>MTSPVPIAVVGPTATGKSDLALDLAERLGGEIVNIDAMQLYRGMDIGTAKLAPAERRGIPHHQLDVLDVTETATVANYQQAAVRDVEGIAARGAVPVIVGGSMMYVQSLLDEWSFPATDASVRARWEAVLAEKGVAAVHAELGRVDPEAAASILPTDGRRLVRALEVVEITGKPFAASAPRIGEPRWGTHIVGVDRDTAELDDRIRLRTRLMFERGLVDEVRGLIDVGLREGVTAPRAIGYAQVLAWLDGEYDLDEAQERTFIGTRRYVRRQRSWFRRDTRIHWVDGSDPDLADTTIRTLGETRRMGER</sequence>
<gene>
    <name evidence="1" type="primary">miaA</name>
    <name type="ordered locus">RHA1_ro06775</name>
</gene>
<keyword id="KW-0067">ATP-binding</keyword>
<keyword id="KW-0460">Magnesium</keyword>
<keyword id="KW-0547">Nucleotide-binding</keyword>
<keyword id="KW-0808">Transferase</keyword>
<keyword id="KW-0819">tRNA processing</keyword>
<protein>
    <recommendedName>
        <fullName evidence="1">tRNA dimethylallyltransferase</fullName>
        <ecNumber evidence="1">2.5.1.75</ecNumber>
    </recommendedName>
    <alternativeName>
        <fullName evidence="1">Dimethylallyl diphosphate:tRNA dimethylallyltransferase</fullName>
        <shortName evidence="1">DMAPP:tRNA dimethylallyltransferase</shortName>
        <shortName evidence="1">DMATase</shortName>
    </alternativeName>
    <alternativeName>
        <fullName evidence="1">Isopentenyl-diphosphate:tRNA isopentenyltransferase</fullName>
        <shortName evidence="1">IPP transferase</shortName>
        <shortName evidence="1">IPPT</shortName>
        <shortName evidence="1">IPTase</shortName>
    </alternativeName>
</protein>
<accession>Q0S1N9</accession>
<reference key="1">
    <citation type="journal article" date="2006" name="Proc. Natl. Acad. Sci. U.S.A.">
        <title>The complete genome of Rhodococcus sp. RHA1 provides insights into a catabolic powerhouse.</title>
        <authorList>
            <person name="McLeod M.P."/>
            <person name="Warren R.L."/>
            <person name="Hsiao W.W.L."/>
            <person name="Araki N."/>
            <person name="Myhre M."/>
            <person name="Fernandes C."/>
            <person name="Miyazawa D."/>
            <person name="Wong W."/>
            <person name="Lillquist A.L."/>
            <person name="Wang D."/>
            <person name="Dosanjh M."/>
            <person name="Hara H."/>
            <person name="Petrescu A."/>
            <person name="Morin R.D."/>
            <person name="Yang G."/>
            <person name="Stott J.M."/>
            <person name="Schein J.E."/>
            <person name="Shin H."/>
            <person name="Smailus D."/>
            <person name="Siddiqui A.S."/>
            <person name="Marra M.A."/>
            <person name="Jones S.J.M."/>
            <person name="Holt R."/>
            <person name="Brinkman F.S.L."/>
            <person name="Miyauchi K."/>
            <person name="Fukuda M."/>
            <person name="Davies J.E."/>
            <person name="Mohn W.W."/>
            <person name="Eltis L.D."/>
        </authorList>
    </citation>
    <scope>NUCLEOTIDE SEQUENCE [LARGE SCALE GENOMIC DNA]</scope>
    <source>
        <strain>RHA1</strain>
    </source>
</reference>
<evidence type="ECO:0000255" key="1">
    <source>
        <dbReference type="HAMAP-Rule" id="MF_00185"/>
    </source>
</evidence>
<organism>
    <name type="scientific">Rhodococcus jostii (strain RHA1)</name>
    <dbReference type="NCBI Taxonomy" id="101510"/>
    <lineage>
        <taxon>Bacteria</taxon>
        <taxon>Bacillati</taxon>
        <taxon>Actinomycetota</taxon>
        <taxon>Actinomycetes</taxon>
        <taxon>Mycobacteriales</taxon>
        <taxon>Nocardiaceae</taxon>
        <taxon>Rhodococcus</taxon>
    </lineage>
</organism>
<feature type="chain" id="PRO_0000377286" description="tRNA dimethylallyltransferase">
    <location>
        <begin position="1"/>
        <end position="309"/>
    </location>
</feature>
<feature type="binding site" evidence="1">
    <location>
        <begin position="11"/>
        <end position="18"/>
    </location>
    <ligand>
        <name>ATP</name>
        <dbReference type="ChEBI" id="CHEBI:30616"/>
    </ligand>
</feature>
<feature type="binding site" evidence="1">
    <location>
        <begin position="13"/>
        <end position="18"/>
    </location>
    <ligand>
        <name>substrate</name>
    </ligand>
</feature>
<feature type="site" description="Interaction with substrate tRNA" evidence="1">
    <location>
        <position position="102"/>
    </location>
</feature>
<feature type="site" description="Interaction with substrate tRNA" evidence="1">
    <location>
        <position position="123"/>
    </location>
</feature>